<dbReference type="EMBL" id="FM200053">
    <property type="protein sequence ID" value="CAR61330.1"/>
    <property type="molecule type" value="Genomic_DNA"/>
</dbReference>
<dbReference type="RefSeq" id="WP_000529945.1">
    <property type="nucleotide sequence ID" value="NC_011147.1"/>
</dbReference>
<dbReference type="SMR" id="B5BGY0"/>
<dbReference type="GeneID" id="97603663"/>
<dbReference type="KEGG" id="sek:SSPA3079"/>
<dbReference type="HOGENOM" id="CLU_058591_0_2_6"/>
<dbReference type="Proteomes" id="UP000001869">
    <property type="component" value="Chromosome"/>
</dbReference>
<dbReference type="GO" id="GO:0022627">
    <property type="term" value="C:cytosolic small ribosomal subunit"/>
    <property type="evidence" value="ECO:0007669"/>
    <property type="project" value="TreeGrafter"/>
</dbReference>
<dbReference type="GO" id="GO:0003729">
    <property type="term" value="F:mRNA binding"/>
    <property type="evidence" value="ECO:0007669"/>
    <property type="project" value="UniProtKB-UniRule"/>
</dbReference>
<dbReference type="GO" id="GO:0019843">
    <property type="term" value="F:rRNA binding"/>
    <property type="evidence" value="ECO:0007669"/>
    <property type="project" value="UniProtKB-UniRule"/>
</dbReference>
<dbReference type="GO" id="GO:0003735">
    <property type="term" value="F:structural constituent of ribosome"/>
    <property type="evidence" value="ECO:0007669"/>
    <property type="project" value="InterPro"/>
</dbReference>
<dbReference type="GO" id="GO:0006412">
    <property type="term" value="P:translation"/>
    <property type="evidence" value="ECO:0007669"/>
    <property type="project" value="UniProtKB-UniRule"/>
</dbReference>
<dbReference type="CDD" id="cd02412">
    <property type="entry name" value="KH-II_30S_S3"/>
    <property type="match status" value="1"/>
</dbReference>
<dbReference type="FunFam" id="3.30.1140.32:FF:000001">
    <property type="entry name" value="30S ribosomal protein S3"/>
    <property type="match status" value="1"/>
</dbReference>
<dbReference type="FunFam" id="3.30.300.20:FF:000001">
    <property type="entry name" value="30S ribosomal protein S3"/>
    <property type="match status" value="1"/>
</dbReference>
<dbReference type="Gene3D" id="3.30.300.20">
    <property type="match status" value="1"/>
</dbReference>
<dbReference type="Gene3D" id="3.30.1140.32">
    <property type="entry name" value="Ribosomal protein S3, C-terminal domain"/>
    <property type="match status" value="1"/>
</dbReference>
<dbReference type="HAMAP" id="MF_01309_B">
    <property type="entry name" value="Ribosomal_uS3_B"/>
    <property type="match status" value="1"/>
</dbReference>
<dbReference type="InterPro" id="IPR004087">
    <property type="entry name" value="KH_dom"/>
</dbReference>
<dbReference type="InterPro" id="IPR015946">
    <property type="entry name" value="KH_dom-like_a/b"/>
</dbReference>
<dbReference type="InterPro" id="IPR004044">
    <property type="entry name" value="KH_dom_type_2"/>
</dbReference>
<dbReference type="InterPro" id="IPR009019">
    <property type="entry name" value="KH_sf_prok-type"/>
</dbReference>
<dbReference type="InterPro" id="IPR036419">
    <property type="entry name" value="Ribosomal_S3_C_sf"/>
</dbReference>
<dbReference type="InterPro" id="IPR005704">
    <property type="entry name" value="Ribosomal_uS3_bac-typ"/>
</dbReference>
<dbReference type="InterPro" id="IPR001351">
    <property type="entry name" value="Ribosomal_uS3_C"/>
</dbReference>
<dbReference type="InterPro" id="IPR018280">
    <property type="entry name" value="Ribosomal_uS3_CS"/>
</dbReference>
<dbReference type="NCBIfam" id="TIGR01009">
    <property type="entry name" value="rpsC_bact"/>
    <property type="match status" value="1"/>
</dbReference>
<dbReference type="PANTHER" id="PTHR11760">
    <property type="entry name" value="30S/40S RIBOSOMAL PROTEIN S3"/>
    <property type="match status" value="1"/>
</dbReference>
<dbReference type="PANTHER" id="PTHR11760:SF19">
    <property type="entry name" value="SMALL RIBOSOMAL SUBUNIT PROTEIN US3C"/>
    <property type="match status" value="1"/>
</dbReference>
<dbReference type="Pfam" id="PF07650">
    <property type="entry name" value="KH_2"/>
    <property type="match status" value="1"/>
</dbReference>
<dbReference type="Pfam" id="PF00189">
    <property type="entry name" value="Ribosomal_S3_C"/>
    <property type="match status" value="1"/>
</dbReference>
<dbReference type="SMART" id="SM00322">
    <property type="entry name" value="KH"/>
    <property type="match status" value="1"/>
</dbReference>
<dbReference type="SUPFAM" id="SSF54814">
    <property type="entry name" value="Prokaryotic type KH domain (KH-domain type II)"/>
    <property type="match status" value="1"/>
</dbReference>
<dbReference type="SUPFAM" id="SSF54821">
    <property type="entry name" value="Ribosomal protein S3 C-terminal domain"/>
    <property type="match status" value="1"/>
</dbReference>
<dbReference type="PROSITE" id="PS50823">
    <property type="entry name" value="KH_TYPE_2"/>
    <property type="match status" value="1"/>
</dbReference>
<dbReference type="PROSITE" id="PS00548">
    <property type="entry name" value="RIBOSOMAL_S3"/>
    <property type="match status" value="1"/>
</dbReference>
<feature type="chain" id="PRO_1000141016" description="Small ribosomal subunit protein uS3">
    <location>
        <begin position="1"/>
        <end position="233"/>
    </location>
</feature>
<feature type="domain" description="KH type-2" evidence="1">
    <location>
        <begin position="39"/>
        <end position="107"/>
    </location>
</feature>
<sequence length="233" mass="25983">MGQKVHPNGIRLGIVKPWNSTWFANTKEFADNLDSDFKVRQYLTKELAKASVSRIVIERPAKSIRVTIHTARPGIVIGKKGEDVEKLRKVVADIAGVPAQINIAEVRKPELDAKLVADSITSQLERRVMFRRAMKRAVQNAMRLGAKGIKVEVSGRLGGAEIARTEWYREGRVPLHTLRADIDYNTSEAHTTYGVIGVKVWIFKGEILGGMAAVEQPEKPAAQPKKQQRKGRK</sequence>
<keyword id="KW-0687">Ribonucleoprotein</keyword>
<keyword id="KW-0689">Ribosomal protein</keyword>
<keyword id="KW-0694">RNA-binding</keyword>
<keyword id="KW-0699">rRNA-binding</keyword>
<accession>B5BGY0</accession>
<comment type="function">
    <text evidence="1">Binds the lower part of the 30S subunit head. Binds mRNA in the 70S ribosome, positioning it for translation.</text>
</comment>
<comment type="subunit">
    <text evidence="1">Part of the 30S ribosomal subunit. Forms a tight complex with proteins S10 and S14.</text>
</comment>
<comment type="similarity">
    <text evidence="1">Belongs to the universal ribosomal protein uS3 family.</text>
</comment>
<name>RS3_SALPK</name>
<evidence type="ECO:0000255" key="1">
    <source>
        <dbReference type="HAMAP-Rule" id="MF_01309"/>
    </source>
</evidence>
<evidence type="ECO:0000305" key="2"/>
<gene>
    <name evidence="1" type="primary">rpsC</name>
    <name type="ordered locus">SSPA3079</name>
</gene>
<proteinExistence type="inferred from homology"/>
<reference key="1">
    <citation type="journal article" date="2009" name="BMC Genomics">
        <title>Pseudogene accumulation in the evolutionary histories of Salmonella enterica serovars Paratyphi A and Typhi.</title>
        <authorList>
            <person name="Holt K.E."/>
            <person name="Thomson N.R."/>
            <person name="Wain J."/>
            <person name="Langridge G.C."/>
            <person name="Hasan R."/>
            <person name="Bhutta Z.A."/>
            <person name="Quail M.A."/>
            <person name="Norbertczak H."/>
            <person name="Walker D."/>
            <person name="Simmonds M."/>
            <person name="White B."/>
            <person name="Bason N."/>
            <person name="Mungall K."/>
            <person name="Dougan G."/>
            <person name="Parkhill J."/>
        </authorList>
    </citation>
    <scope>NUCLEOTIDE SEQUENCE [LARGE SCALE GENOMIC DNA]</scope>
    <source>
        <strain>AKU_12601</strain>
    </source>
</reference>
<organism>
    <name type="scientific">Salmonella paratyphi A (strain AKU_12601)</name>
    <dbReference type="NCBI Taxonomy" id="554290"/>
    <lineage>
        <taxon>Bacteria</taxon>
        <taxon>Pseudomonadati</taxon>
        <taxon>Pseudomonadota</taxon>
        <taxon>Gammaproteobacteria</taxon>
        <taxon>Enterobacterales</taxon>
        <taxon>Enterobacteriaceae</taxon>
        <taxon>Salmonella</taxon>
    </lineage>
</organism>
<protein>
    <recommendedName>
        <fullName evidence="1">Small ribosomal subunit protein uS3</fullName>
    </recommendedName>
    <alternativeName>
        <fullName evidence="2">30S ribosomal protein S3</fullName>
    </alternativeName>
</protein>